<dbReference type="EC" id="6.3.4.2" evidence="1"/>
<dbReference type="EMBL" id="FM204883">
    <property type="protein sequence ID" value="CAW95172.1"/>
    <property type="molecule type" value="Genomic_DNA"/>
</dbReference>
<dbReference type="RefSeq" id="WP_012680107.1">
    <property type="nucleotide sequence ID" value="NC_012471.1"/>
</dbReference>
<dbReference type="SMR" id="C0M8K6"/>
<dbReference type="KEGG" id="seu:SEQ_1945"/>
<dbReference type="HOGENOM" id="CLU_011675_5_0_9"/>
<dbReference type="OrthoDB" id="9801107at2"/>
<dbReference type="UniPathway" id="UPA00159">
    <property type="reaction ID" value="UER00277"/>
</dbReference>
<dbReference type="Proteomes" id="UP000001365">
    <property type="component" value="Chromosome"/>
</dbReference>
<dbReference type="GO" id="GO:0005829">
    <property type="term" value="C:cytosol"/>
    <property type="evidence" value="ECO:0007669"/>
    <property type="project" value="TreeGrafter"/>
</dbReference>
<dbReference type="GO" id="GO:0005524">
    <property type="term" value="F:ATP binding"/>
    <property type="evidence" value="ECO:0007669"/>
    <property type="project" value="UniProtKB-KW"/>
</dbReference>
<dbReference type="GO" id="GO:0003883">
    <property type="term" value="F:CTP synthase activity"/>
    <property type="evidence" value="ECO:0007669"/>
    <property type="project" value="UniProtKB-UniRule"/>
</dbReference>
<dbReference type="GO" id="GO:0004359">
    <property type="term" value="F:glutaminase activity"/>
    <property type="evidence" value="ECO:0007669"/>
    <property type="project" value="RHEA"/>
</dbReference>
<dbReference type="GO" id="GO:0042802">
    <property type="term" value="F:identical protein binding"/>
    <property type="evidence" value="ECO:0007669"/>
    <property type="project" value="TreeGrafter"/>
</dbReference>
<dbReference type="GO" id="GO:0046872">
    <property type="term" value="F:metal ion binding"/>
    <property type="evidence" value="ECO:0007669"/>
    <property type="project" value="UniProtKB-KW"/>
</dbReference>
<dbReference type="GO" id="GO:0044210">
    <property type="term" value="P:'de novo' CTP biosynthetic process"/>
    <property type="evidence" value="ECO:0007669"/>
    <property type="project" value="UniProtKB-UniRule"/>
</dbReference>
<dbReference type="GO" id="GO:0019856">
    <property type="term" value="P:pyrimidine nucleobase biosynthetic process"/>
    <property type="evidence" value="ECO:0007669"/>
    <property type="project" value="TreeGrafter"/>
</dbReference>
<dbReference type="CDD" id="cd03113">
    <property type="entry name" value="CTPS_N"/>
    <property type="match status" value="1"/>
</dbReference>
<dbReference type="CDD" id="cd01746">
    <property type="entry name" value="GATase1_CTP_Synthase"/>
    <property type="match status" value="1"/>
</dbReference>
<dbReference type="FunFam" id="3.40.50.300:FF:000009">
    <property type="entry name" value="CTP synthase"/>
    <property type="match status" value="1"/>
</dbReference>
<dbReference type="FunFam" id="3.40.50.880:FF:000002">
    <property type="entry name" value="CTP synthase"/>
    <property type="match status" value="1"/>
</dbReference>
<dbReference type="Gene3D" id="3.40.50.880">
    <property type="match status" value="1"/>
</dbReference>
<dbReference type="Gene3D" id="3.40.50.300">
    <property type="entry name" value="P-loop containing nucleotide triphosphate hydrolases"/>
    <property type="match status" value="1"/>
</dbReference>
<dbReference type="HAMAP" id="MF_01227">
    <property type="entry name" value="PyrG"/>
    <property type="match status" value="1"/>
</dbReference>
<dbReference type="InterPro" id="IPR029062">
    <property type="entry name" value="Class_I_gatase-like"/>
</dbReference>
<dbReference type="InterPro" id="IPR004468">
    <property type="entry name" value="CTP_synthase"/>
</dbReference>
<dbReference type="InterPro" id="IPR017456">
    <property type="entry name" value="CTP_synthase_N"/>
</dbReference>
<dbReference type="InterPro" id="IPR017926">
    <property type="entry name" value="GATASE"/>
</dbReference>
<dbReference type="InterPro" id="IPR033828">
    <property type="entry name" value="GATase1_CTP_Synthase"/>
</dbReference>
<dbReference type="InterPro" id="IPR027417">
    <property type="entry name" value="P-loop_NTPase"/>
</dbReference>
<dbReference type="NCBIfam" id="NF003792">
    <property type="entry name" value="PRK05380.1"/>
    <property type="match status" value="1"/>
</dbReference>
<dbReference type="NCBIfam" id="TIGR00337">
    <property type="entry name" value="PyrG"/>
    <property type="match status" value="1"/>
</dbReference>
<dbReference type="PANTHER" id="PTHR11550">
    <property type="entry name" value="CTP SYNTHASE"/>
    <property type="match status" value="1"/>
</dbReference>
<dbReference type="PANTHER" id="PTHR11550:SF0">
    <property type="entry name" value="CTP SYNTHASE-RELATED"/>
    <property type="match status" value="1"/>
</dbReference>
<dbReference type="Pfam" id="PF06418">
    <property type="entry name" value="CTP_synth_N"/>
    <property type="match status" value="1"/>
</dbReference>
<dbReference type="Pfam" id="PF00117">
    <property type="entry name" value="GATase"/>
    <property type="match status" value="1"/>
</dbReference>
<dbReference type="SUPFAM" id="SSF52317">
    <property type="entry name" value="Class I glutamine amidotransferase-like"/>
    <property type="match status" value="1"/>
</dbReference>
<dbReference type="SUPFAM" id="SSF52540">
    <property type="entry name" value="P-loop containing nucleoside triphosphate hydrolases"/>
    <property type="match status" value="1"/>
</dbReference>
<dbReference type="PROSITE" id="PS51273">
    <property type="entry name" value="GATASE_TYPE_1"/>
    <property type="match status" value="1"/>
</dbReference>
<reference key="1">
    <citation type="journal article" date="2009" name="PLoS Pathog.">
        <title>Genomic evidence for the evolution of Streptococcus equi: host restriction, increased virulence, and genetic exchange with human pathogens.</title>
        <authorList>
            <person name="Holden M.T.G."/>
            <person name="Heather Z."/>
            <person name="Paillot R."/>
            <person name="Steward K.F."/>
            <person name="Webb K."/>
            <person name="Ainslie F."/>
            <person name="Jourdan T."/>
            <person name="Bason N.C."/>
            <person name="Holroyd N.E."/>
            <person name="Mungall K."/>
            <person name="Quail M.A."/>
            <person name="Sanders M."/>
            <person name="Simmonds M."/>
            <person name="Willey D."/>
            <person name="Brooks K."/>
            <person name="Aanensen D.M."/>
            <person name="Spratt B.G."/>
            <person name="Jolley K.A."/>
            <person name="Maiden M.C.J."/>
            <person name="Kehoe M."/>
            <person name="Chanter N."/>
            <person name="Bentley S.D."/>
            <person name="Robinson C."/>
            <person name="Maskell D.J."/>
            <person name="Parkhill J."/>
            <person name="Waller A.S."/>
        </authorList>
    </citation>
    <scope>NUCLEOTIDE SEQUENCE [LARGE SCALE GENOMIC DNA]</scope>
    <source>
        <strain>4047</strain>
    </source>
</reference>
<gene>
    <name evidence="1" type="primary">pyrG</name>
    <name type="ordered locus">SEQ_1945</name>
</gene>
<evidence type="ECO:0000255" key="1">
    <source>
        <dbReference type="HAMAP-Rule" id="MF_01227"/>
    </source>
</evidence>
<feature type="chain" id="PRO_1000164961" description="CTP synthase">
    <location>
        <begin position="1"/>
        <end position="537"/>
    </location>
</feature>
<feature type="domain" description="Glutamine amidotransferase type-1" evidence="1">
    <location>
        <begin position="292"/>
        <end position="535"/>
    </location>
</feature>
<feature type="region of interest" description="Amidoligase domain" evidence="1">
    <location>
        <begin position="1"/>
        <end position="267"/>
    </location>
</feature>
<feature type="active site" description="Nucleophile; for glutamine hydrolysis" evidence="1">
    <location>
        <position position="381"/>
    </location>
</feature>
<feature type="active site" evidence="1">
    <location>
        <position position="508"/>
    </location>
</feature>
<feature type="active site" evidence="1">
    <location>
        <position position="510"/>
    </location>
</feature>
<feature type="binding site" evidence="1">
    <location>
        <position position="13"/>
    </location>
    <ligand>
        <name>CTP</name>
        <dbReference type="ChEBI" id="CHEBI:37563"/>
        <note>allosteric inhibitor</note>
    </ligand>
</feature>
<feature type="binding site" evidence="1">
    <location>
        <position position="13"/>
    </location>
    <ligand>
        <name>UTP</name>
        <dbReference type="ChEBI" id="CHEBI:46398"/>
    </ligand>
</feature>
<feature type="binding site" evidence="1">
    <location>
        <begin position="14"/>
        <end position="19"/>
    </location>
    <ligand>
        <name>ATP</name>
        <dbReference type="ChEBI" id="CHEBI:30616"/>
    </ligand>
</feature>
<feature type="binding site" evidence="1">
    <location>
        <position position="54"/>
    </location>
    <ligand>
        <name>L-glutamine</name>
        <dbReference type="ChEBI" id="CHEBI:58359"/>
    </ligand>
</feature>
<feature type="binding site" evidence="1">
    <location>
        <position position="71"/>
    </location>
    <ligand>
        <name>ATP</name>
        <dbReference type="ChEBI" id="CHEBI:30616"/>
    </ligand>
</feature>
<feature type="binding site" evidence="1">
    <location>
        <position position="71"/>
    </location>
    <ligand>
        <name>Mg(2+)</name>
        <dbReference type="ChEBI" id="CHEBI:18420"/>
    </ligand>
</feature>
<feature type="binding site" evidence="1">
    <location>
        <position position="141"/>
    </location>
    <ligand>
        <name>Mg(2+)</name>
        <dbReference type="ChEBI" id="CHEBI:18420"/>
    </ligand>
</feature>
<feature type="binding site" evidence="1">
    <location>
        <begin position="148"/>
        <end position="150"/>
    </location>
    <ligand>
        <name>CTP</name>
        <dbReference type="ChEBI" id="CHEBI:37563"/>
        <note>allosteric inhibitor</note>
    </ligand>
</feature>
<feature type="binding site" evidence="1">
    <location>
        <begin position="188"/>
        <end position="193"/>
    </location>
    <ligand>
        <name>CTP</name>
        <dbReference type="ChEBI" id="CHEBI:37563"/>
        <note>allosteric inhibitor</note>
    </ligand>
</feature>
<feature type="binding site" evidence="1">
    <location>
        <begin position="188"/>
        <end position="193"/>
    </location>
    <ligand>
        <name>UTP</name>
        <dbReference type="ChEBI" id="CHEBI:46398"/>
    </ligand>
</feature>
<feature type="binding site" evidence="1">
    <location>
        <position position="224"/>
    </location>
    <ligand>
        <name>CTP</name>
        <dbReference type="ChEBI" id="CHEBI:37563"/>
        <note>allosteric inhibitor</note>
    </ligand>
</feature>
<feature type="binding site" evidence="1">
    <location>
        <position position="224"/>
    </location>
    <ligand>
        <name>UTP</name>
        <dbReference type="ChEBI" id="CHEBI:46398"/>
    </ligand>
</feature>
<feature type="binding site" evidence="1">
    <location>
        <begin position="240"/>
        <end position="242"/>
    </location>
    <ligand>
        <name>ATP</name>
        <dbReference type="ChEBI" id="CHEBI:30616"/>
    </ligand>
</feature>
<feature type="binding site" evidence="1">
    <location>
        <position position="354"/>
    </location>
    <ligand>
        <name>L-glutamine</name>
        <dbReference type="ChEBI" id="CHEBI:58359"/>
    </ligand>
</feature>
<feature type="binding site" evidence="1">
    <location>
        <begin position="382"/>
        <end position="385"/>
    </location>
    <ligand>
        <name>L-glutamine</name>
        <dbReference type="ChEBI" id="CHEBI:58359"/>
    </ligand>
</feature>
<feature type="binding site" evidence="1">
    <location>
        <position position="405"/>
    </location>
    <ligand>
        <name>L-glutamine</name>
        <dbReference type="ChEBI" id="CHEBI:58359"/>
    </ligand>
</feature>
<feature type="binding site" evidence="1">
    <location>
        <position position="463"/>
    </location>
    <ligand>
        <name>L-glutamine</name>
        <dbReference type="ChEBI" id="CHEBI:58359"/>
    </ligand>
</feature>
<proteinExistence type="inferred from homology"/>
<comment type="function">
    <text evidence="1">Catalyzes the ATP-dependent amination of UTP to CTP with either L-glutamine or ammonia as the source of nitrogen. Regulates intracellular CTP levels through interactions with the four ribonucleotide triphosphates.</text>
</comment>
<comment type="catalytic activity">
    <reaction evidence="1">
        <text>UTP + L-glutamine + ATP + H2O = CTP + L-glutamate + ADP + phosphate + 2 H(+)</text>
        <dbReference type="Rhea" id="RHEA:26426"/>
        <dbReference type="ChEBI" id="CHEBI:15377"/>
        <dbReference type="ChEBI" id="CHEBI:15378"/>
        <dbReference type="ChEBI" id="CHEBI:29985"/>
        <dbReference type="ChEBI" id="CHEBI:30616"/>
        <dbReference type="ChEBI" id="CHEBI:37563"/>
        <dbReference type="ChEBI" id="CHEBI:43474"/>
        <dbReference type="ChEBI" id="CHEBI:46398"/>
        <dbReference type="ChEBI" id="CHEBI:58359"/>
        <dbReference type="ChEBI" id="CHEBI:456216"/>
        <dbReference type="EC" id="6.3.4.2"/>
    </reaction>
</comment>
<comment type="catalytic activity">
    <reaction evidence="1">
        <text>L-glutamine + H2O = L-glutamate + NH4(+)</text>
        <dbReference type="Rhea" id="RHEA:15889"/>
        <dbReference type="ChEBI" id="CHEBI:15377"/>
        <dbReference type="ChEBI" id="CHEBI:28938"/>
        <dbReference type="ChEBI" id="CHEBI:29985"/>
        <dbReference type="ChEBI" id="CHEBI:58359"/>
    </reaction>
</comment>
<comment type="catalytic activity">
    <reaction evidence="1">
        <text>UTP + NH4(+) + ATP = CTP + ADP + phosphate + 2 H(+)</text>
        <dbReference type="Rhea" id="RHEA:16597"/>
        <dbReference type="ChEBI" id="CHEBI:15378"/>
        <dbReference type="ChEBI" id="CHEBI:28938"/>
        <dbReference type="ChEBI" id="CHEBI:30616"/>
        <dbReference type="ChEBI" id="CHEBI:37563"/>
        <dbReference type="ChEBI" id="CHEBI:43474"/>
        <dbReference type="ChEBI" id="CHEBI:46398"/>
        <dbReference type="ChEBI" id="CHEBI:456216"/>
    </reaction>
</comment>
<comment type="activity regulation">
    <text evidence="1">Allosterically activated by GTP, when glutamine is the substrate; GTP has no effect on the reaction when ammonia is the substrate. The allosteric effector GTP functions by stabilizing the protein conformation that binds the tetrahedral intermediate(s) formed during glutamine hydrolysis. Inhibited by the product CTP, via allosteric rather than competitive inhibition.</text>
</comment>
<comment type="pathway">
    <text evidence="1">Pyrimidine metabolism; CTP biosynthesis via de novo pathway; CTP from UDP: step 2/2.</text>
</comment>
<comment type="subunit">
    <text evidence="1">Homotetramer.</text>
</comment>
<comment type="miscellaneous">
    <text evidence="1">CTPSs have evolved a hybrid strategy for distinguishing between UTP and CTP. The overlapping regions of the product feedback inhibitory and substrate sites recognize a common feature in both compounds, the triphosphate moiety. To differentiate isosteric substrate and product pyrimidine rings, an additional pocket far from the expected kinase/ligase catalytic site, specifically recognizes the cytosine and ribose portions of the product inhibitor.</text>
</comment>
<comment type="similarity">
    <text evidence="1">Belongs to the CTP synthase family.</text>
</comment>
<accession>C0M8K6</accession>
<name>PYRG_STRE4</name>
<keyword id="KW-0067">ATP-binding</keyword>
<keyword id="KW-0315">Glutamine amidotransferase</keyword>
<keyword id="KW-0436">Ligase</keyword>
<keyword id="KW-0460">Magnesium</keyword>
<keyword id="KW-0479">Metal-binding</keyword>
<keyword id="KW-0547">Nucleotide-binding</keyword>
<keyword id="KW-0665">Pyrimidine biosynthesis</keyword>
<organism>
    <name type="scientific">Streptococcus equi subsp. equi (strain 4047)</name>
    <dbReference type="NCBI Taxonomy" id="553482"/>
    <lineage>
        <taxon>Bacteria</taxon>
        <taxon>Bacillati</taxon>
        <taxon>Bacillota</taxon>
        <taxon>Bacilli</taxon>
        <taxon>Lactobacillales</taxon>
        <taxon>Streptococcaceae</taxon>
        <taxon>Streptococcus</taxon>
    </lineage>
</organism>
<sequence>MTKYIFVTGGVVSSIGKGIVAASLGRLLKNRGLKVTIQKFDPYINIDPGTMSPYQHGEVYVTDDGAETDLDLGHYERFIDINLNKYSNVTTGKIYSEVLRKERKGEYLGATVQVIPHITDALKEKIKRAATTTDSDVIITEVGGTVGDIESLPFLEALRQMKADVGSENVMYIHTTLLPYLKAAGEMKTKPTQHSVKELRGLGIQPNMLVIRTEEPVEQGIKNKLAQFCDVNPEAVIESRDVEHLYQIPLNLQAQSMDQIVCDHLKLDVPQADMTEWSAMVDRVMNLKKTTRIALVGKYVELPDAYLSVVEALKHSGYANDTAIELDWINANDLTAENAKKLLGQADGIIVPGGFGQRGTEGKIQAIRYAREHDVPMLGICLGMQLTCVEFARHVLGMEKANSFELDPDTAYPIIDIMRDQIDIEDMGGTLRLGLYPCKLKAGSRAAAAYNNQEVVQRRHRHRYEFNNKFRQDFEAAGFVFSGVSPDNRLVEIVELPEKKFFVAAQYHPELQSRPNRPEELYTAFVTAAVKNKNQSL</sequence>
<protein>
    <recommendedName>
        <fullName evidence="1">CTP synthase</fullName>
        <ecNumber evidence="1">6.3.4.2</ecNumber>
    </recommendedName>
    <alternativeName>
        <fullName evidence="1">Cytidine 5'-triphosphate synthase</fullName>
    </alternativeName>
    <alternativeName>
        <fullName evidence="1">Cytidine triphosphate synthetase</fullName>
        <shortName evidence="1">CTP synthetase</shortName>
        <shortName evidence="1">CTPS</shortName>
    </alternativeName>
    <alternativeName>
        <fullName evidence="1">UTP--ammonia ligase</fullName>
    </alternativeName>
</protein>